<keyword id="KW-0687">Ribonucleoprotein</keyword>
<keyword id="KW-0689">Ribosomal protein</keyword>
<reference key="1">
    <citation type="journal article" date="2005" name="J. Infect. Dis.">
        <title>Genome sequence of a serotype M28 strain of group A Streptococcus: potential new insights into puerperal sepsis and bacterial disease specificity.</title>
        <authorList>
            <person name="Green N.M."/>
            <person name="Zhang S."/>
            <person name="Porcella S.F."/>
            <person name="Nagiec M.J."/>
            <person name="Barbian K.D."/>
            <person name="Beres S.B."/>
            <person name="Lefebvre R.B."/>
            <person name="Musser J.M."/>
        </authorList>
    </citation>
    <scope>NUCLEOTIDE SEQUENCE [LARGE SCALE GENOMIC DNA]</scope>
    <source>
        <strain>MGAS6180</strain>
    </source>
</reference>
<proteinExistence type="inferred from homology"/>
<evidence type="ECO:0000255" key="1">
    <source>
        <dbReference type="HAMAP-Rule" id="MF_00294"/>
    </source>
</evidence>
<comment type="similarity">
    <text evidence="1">Belongs to the bacterial ribosomal protein bL33 family.</text>
</comment>
<feature type="chain" id="PRO_0000356727" description="Large ribosomal subunit protein bL33A">
    <location>
        <begin position="1"/>
        <end position="48"/>
    </location>
</feature>
<accession>Q48UU2</accession>
<protein>
    <recommendedName>
        <fullName evidence="1">Large ribosomal subunit protein bL33A</fullName>
    </recommendedName>
    <alternativeName>
        <fullName evidence="1">50S ribosomal protein L33 1</fullName>
    </alternativeName>
</protein>
<dbReference type="EMBL" id="CP000056">
    <property type="protein sequence ID" value="AAX71514.1"/>
    <property type="molecule type" value="Genomic_DNA"/>
</dbReference>
<dbReference type="SMR" id="Q48UU2"/>
<dbReference type="KEGG" id="spb:M28_Spy0400"/>
<dbReference type="HOGENOM" id="CLU_190949_0_2_9"/>
<dbReference type="GO" id="GO:0005737">
    <property type="term" value="C:cytoplasm"/>
    <property type="evidence" value="ECO:0007669"/>
    <property type="project" value="UniProtKB-ARBA"/>
</dbReference>
<dbReference type="GO" id="GO:1990904">
    <property type="term" value="C:ribonucleoprotein complex"/>
    <property type="evidence" value="ECO:0007669"/>
    <property type="project" value="UniProtKB-KW"/>
</dbReference>
<dbReference type="GO" id="GO:0005840">
    <property type="term" value="C:ribosome"/>
    <property type="evidence" value="ECO:0007669"/>
    <property type="project" value="UniProtKB-KW"/>
</dbReference>
<dbReference type="GO" id="GO:0003735">
    <property type="term" value="F:structural constituent of ribosome"/>
    <property type="evidence" value="ECO:0007669"/>
    <property type="project" value="InterPro"/>
</dbReference>
<dbReference type="GO" id="GO:0006412">
    <property type="term" value="P:translation"/>
    <property type="evidence" value="ECO:0007669"/>
    <property type="project" value="UniProtKB-UniRule"/>
</dbReference>
<dbReference type="Gene3D" id="2.20.28.120">
    <property type="entry name" value="Ribosomal protein L33"/>
    <property type="match status" value="1"/>
</dbReference>
<dbReference type="HAMAP" id="MF_00294">
    <property type="entry name" value="Ribosomal_bL33"/>
    <property type="match status" value="1"/>
</dbReference>
<dbReference type="InterPro" id="IPR001705">
    <property type="entry name" value="Ribosomal_bL33"/>
</dbReference>
<dbReference type="InterPro" id="IPR038584">
    <property type="entry name" value="Ribosomal_bL33_sf"/>
</dbReference>
<dbReference type="InterPro" id="IPR011332">
    <property type="entry name" value="Ribosomal_zn-bd"/>
</dbReference>
<dbReference type="NCBIfam" id="NF001764">
    <property type="entry name" value="PRK00504.1"/>
    <property type="match status" value="1"/>
</dbReference>
<dbReference type="NCBIfam" id="NF001860">
    <property type="entry name" value="PRK00595.1"/>
    <property type="match status" value="1"/>
</dbReference>
<dbReference type="NCBIfam" id="TIGR01023">
    <property type="entry name" value="rpmG_bact"/>
    <property type="match status" value="1"/>
</dbReference>
<dbReference type="PANTHER" id="PTHR43168">
    <property type="entry name" value="50S RIBOSOMAL PROTEIN L33, CHLOROPLASTIC"/>
    <property type="match status" value="1"/>
</dbReference>
<dbReference type="PANTHER" id="PTHR43168:SF6">
    <property type="entry name" value="LARGE RIBOSOMAL SUBUNIT PROTEIN BL33A"/>
    <property type="match status" value="1"/>
</dbReference>
<dbReference type="Pfam" id="PF00471">
    <property type="entry name" value="Ribosomal_L33"/>
    <property type="match status" value="1"/>
</dbReference>
<dbReference type="SUPFAM" id="SSF57829">
    <property type="entry name" value="Zn-binding ribosomal proteins"/>
    <property type="match status" value="1"/>
</dbReference>
<gene>
    <name evidence="1" type="primary">rpmG1</name>
    <name type="ordered locus">M28_Spy0400</name>
</gene>
<organism>
    <name type="scientific">Streptococcus pyogenes serotype M28 (strain MGAS6180)</name>
    <dbReference type="NCBI Taxonomy" id="319701"/>
    <lineage>
        <taxon>Bacteria</taxon>
        <taxon>Bacillati</taxon>
        <taxon>Bacillota</taxon>
        <taxon>Bacilli</taxon>
        <taxon>Lactobacillales</taxon>
        <taxon>Streptococcaceae</taxon>
        <taxon>Streptococcus</taxon>
    </lineage>
</organism>
<sequence>MRVKINLECSECGSNNYLTSKNKSSHPEKIKVPKYCPKERKVTLHVET</sequence>
<name>RL331_STRPM</name>